<evidence type="ECO:0000250" key="1"/>
<evidence type="ECO:0000305" key="2"/>
<name>RECX_PSEFL</name>
<keyword id="KW-0963">Cytoplasm</keyword>
<sequence length="155" mass="17973">MTVVLDTLVAVRRTAMDLLARREHGRVELTRKLRQRGAEPEMIETALDRLTEEGLLSEARYLESFVSYRARSGYGPARIREELSQRGLQRADIDLALRECGISWQSQLEDTWRRKFAGHLPIDARERAKQGRFLSYRGFSMDMISRLLSGRDMDD</sequence>
<dbReference type="EMBL" id="U05680">
    <property type="protein sequence ID" value="AAA19132.1"/>
    <property type="molecule type" value="Unassigned_DNA"/>
</dbReference>
<dbReference type="PIR" id="S43482">
    <property type="entry name" value="S43482"/>
</dbReference>
<dbReference type="SMR" id="P37861"/>
<dbReference type="eggNOG" id="COG2137">
    <property type="taxonomic scope" value="Bacteria"/>
</dbReference>
<dbReference type="GO" id="GO:0005737">
    <property type="term" value="C:cytoplasm"/>
    <property type="evidence" value="ECO:0007669"/>
    <property type="project" value="UniProtKB-SubCell"/>
</dbReference>
<dbReference type="GO" id="GO:0006282">
    <property type="term" value="P:regulation of DNA repair"/>
    <property type="evidence" value="ECO:0007669"/>
    <property type="project" value="UniProtKB-UniRule"/>
</dbReference>
<dbReference type="Gene3D" id="1.10.10.10">
    <property type="entry name" value="Winged helix-like DNA-binding domain superfamily/Winged helix DNA-binding domain"/>
    <property type="match status" value="3"/>
</dbReference>
<dbReference type="HAMAP" id="MF_01114">
    <property type="entry name" value="RecX"/>
    <property type="match status" value="1"/>
</dbReference>
<dbReference type="InterPro" id="IPR053926">
    <property type="entry name" value="RecX_HTH_1st"/>
</dbReference>
<dbReference type="InterPro" id="IPR053924">
    <property type="entry name" value="RecX_HTH_2nd"/>
</dbReference>
<dbReference type="InterPro" id="IPR053925">
    <property type="entry name" value="RecX_HTH_3rd"/>
</dbReference>
<dbReference type="InterPro" id="IPR003783">
    <property type="entry name" value="Regulatory_RecX"/>
</dbReference>
<dbReference type="InterPro" id="IPR036388">
    <property type="entry name" value="WH-like_DNA-bd_sf"/>
</dbReference>
<dbReference type="NCBIfam" id="NF001054">
    <property type="entry name" value="PRK00117.2-1"/>
    <property type="match status" value="1"/>
</dbReference>
<dbReference type="PANTHER" id="PTHR33602">
    <property type="entry name" value="REGULATORY PROTEIN RECX FAMILY PROTEIN"/>
    <property type="match status" value="1"/>
</dbReference>
<dbReference type="PANTHER" id="PTHR33602:SF1">
    <property type="entry name" value="REGULATORY PROTEIN RECX FAMILY PROTEIN"/>
    <property type="match status" value="1"/>
</dbReference>
<dbReference type="Pfam" id="PF21982">
    <property type="entry name" value="RecX_HTH1"/>
    <property type="match status" value="1"/>
</dbReference>
<dbReference type="Pfam" id="PF02631">
    <property type="entry name" value="RecX_HTH2"/>
    <property type="match status" value="1"/>
</dbReference>
<dbReference type="Pfam" id="PF21981">
    <property type="entry name" value="RecX_HTH3"/>
    <property type="match status" value="1"/>
</dbReference>
<comment type="function">
    <text evidence="1">Modulates RecA activity.</text>
</comment>
<comment type="subcellular location">
    <subcellularLocation>
        <location evidence="2">Cytoplasm</location>
    </subcellularLocation>
</comment>
<comment type="similarity">
    <text evidence="2">Belongs to the RecX family.</text>
</comment>
<accession>P37861</accession>
<gene>
    <name type="primary">recX</name>
</gene>
<feature type="chain" id="PRO_0000162458" description="Regulatory protein RecX">
    <location>
        <begin position="1"/>
        <end position="155"/>
    </location>
</feature>
<reference key="1">
    <citation type="journal article" date="1994" name="Nucleic Acids Res.">
        <title>A putative regulatory gene downstream of recA is conserved in Gram-negative and Gram-positive bacteria.</title>
        <authorList>
            <person name="de Mot R."/>
            <person name="Schoofs G."/>
            <person name="Vanderleyden J."/>
        </authorList>
    </citation>
    <scope>NUCLEOTIDE SEQUENCE [GENOMIC DNA]</scope>
    <source>
        <strain>OE 28.3</strain>
    </source>
</reference>
<proteinExistence type="inferred from homology"/>
<organism>
    <name type="scientific">Pseudomonas fluorescens</name>
    <dbReference type="NCBI Taxonomy" id="294"/>
    <lineage>
        <taxon>Bacteria</taxon>
        <taxon>Pseudomonadati</taxon>
        <taxon>Pseudomonadota</taxon>
        <taxon>Gammaproteobacteria</taxon>
        <taxon>Pseudomonadales</taxon>
        <taxon>Pseudomonadaceae</taxon>
        <taxon>Pseudomonas</taxon>
    </lineage>
</organism>
<protein>
    <recommendedName>
        <fullName>Regulatory protein RecX</fullName>
    </recommendedName>
</protein>